<dbReference type="GO" id="GO:0005576">
    <property type="term" value="C:extracellular region"/>
    <property type="evidence" value="ECO:0007669"/>
    <property type="project" value="UniProtKB-SubCell"/>
</dbReference>
<dbReference type="GO" id="GO:0006952">
    <property type="term" value="P:defense response"/>
    <property type="evidence" value="ECO:0007669"/>
    <property type="project" value="UniProtKB-KW"/>
</dbReference>
<feature type="peptide" id="PRO_0000043764" description="Caeridin-5">
    <location>
        <begin position="1"/>
        <end position="15"/>
    </location>
</feature>
<feature type="modified residue" description="Leucine amide" evidence="1">
    <location>
        <position position="15"/>
    </location>
</feature>
<protein>
    <recommendedName>
        <fullName>Caeridin-5</fullName>
    </recommendedName>
</protein>
<accession>P82077</accession>
<sequence length="15" mass="1357">GLLGMVGSLLGGLGL</sequence>
<keyword id="KW-0027">Amidation</keyword>
<keyword id="KW-0878">Amphibian defense peptide</keyword>
<keyword id="KW-0903">Direct protein sequencing</keyword>
<keyword id="KW-0964">Secreted</keyword>
<proteinExistence type="evidence at protein level"/>
<comment type="function">
    <text>Caeridins show neither neuropeptide activity nor antibiotic activity.</text>
</comment>
<comment type="subcellular location">
    <subcellularLocation>
        <location>Secreted</location>
    </subcellularLocation>
</comment>
<comment type="tissue specificity">
    <text>Expressed by the skin parotoid and/or rostral glands.</text>
</comment>
<comment type="mass spectrometry" mass="1355.0" method="FAB" evidence="1"/>
<name>CDN5_RANCA</name>
<organism>
    <name type="scientific">Ranoidea caerulea</name>
    <name type="common">Green tree frog</name>
    <name type="synonym">Litoria caerulea</name>
    <dbReference type="NCBI Taxonomy" id="30344"/>
    <lineage>
        <taxon>Eukaryota</taxon>
        <taxon>Metazoa</taxon>
        <taxon>Chordata</taxon>
        <taxon>Craniata</taxon>
        <taxon>Vertebrata</taxon>
        <taxon>Euteleostomi</taxon>
        <taxon>Amphibia</taxon>
        <taxon>Batrachia</taxon>
        <taxon>Anura</taxon>
        <taxon>Neobatrachia</taxon>
        <taxon>Hyloidea</taxon>
        <taxon>Hylidae</taxon>
        <taxon>Pelodryadinae</taxon>
        <taxon>Ranoidea</taxon>
    </lineage>
</organism>
<evidence type="ECO:0000269" key="1">
    <source ref="1"/>
</evidence>
<reference key="1">
    <citation type="journal article" date="1993" name="J. Chem. Soc. Perkin Trans. I">
        <title>Peptides from Australian frogs. Structures of the caeridins from Litoria caerulea.</title>
        <authorList>
            <person name="Waugh R.J."/>
            <person name="Stone D.J.M."/>
            <person name="Bowie J.H."/>
            <person name="Wallace J.C."/>
            <person name="Tyler M.J."/>
        </authorList>
    </citation>
    <scope>PROTEIN SEQUENCE</scope>
    <scope>AMIDATION AT LEU-15</scope>
    <scope>MASS SPECTROMETRY</scope>
    <source>
        <tissue>Parotoid gland</tissue>
    </source>
</reference>